<keyword id="KW-1015">Disulfide bond</keyword>
<keyword id="KW-0967">Endosome</keyword>
<keyword id="KW-0325">Glycoprotein</keyword>
<keyword id="KW-0333">Golgi apparatus</keyword>
<keyword id="KW-0472">Membrane</keyword>
<keyword id="KW-0653">Protein transport</keyword>
<keyword id="KW-1185">Reference proteome</keyword>
<keyword id="KW-0732">Signal</keyword>
<keyword id="KW-0812">Transmembrane</keyword>
<keyword id="KW-1133">Transmembrane helix</keyword>
<keyword id="KW-0813">Transport</keyword>
<comment type="subcellular location">
    <subcellularLocation>
        <location evidence="3">Golgi apparatus</location>
        <location evidence="3">trans-Golgi network membrane</location>
        <topology evidence="3">Multi-pass membrane protein</topology>
    </subcellularLocation>
    <subcellularLocation>
        <location evidence="4">Endosome membrane</location>
        <topology evidence="4">Multi-pass membrane protein</topology>
    </subcellularLocation>
</comment>
<comment type="similarity">
    <text evidence="4">Belongs to the MRL1/IGF2R family.</text>
</comment>
<reference key="1">
    <citation type="journal article" date="2002" name="Nature">
        <title>The genome sequence of Schizosaccharomyces pombe.</title>
        <authorList>
            <person name="Wood V."/>
            <person name="Gwilliam R."/>
            <person name="Rajandream M.A."/>
            <person name="Lyne M.H."/>
            <person name="Lyne R."/>
            <person name="Stewart A."/>
            <person name="Sgouros J.G."/>
            <person name="Peat N."/>
            <person name="Hayles J."/>
            <person name="Baker S.G."/>
            <person name="Basham D."/>
            <person name="Bowman S."/>
            <person name="Brooks K."/>
            <person name="Brown D."/>
            <person name="Brown S."/>
            <person name="Chillingworth T."/>
            <person name="Churcher C.M."/>
            <person name="Collins M."/>
            <person name="Connor R."/>
            <person name="Cronin A."/>
            <person name="Davis P."/>
            <person name="Feltwell T."/>
            <person name="Fraser A."/>
            <person name="Gentles S."/>
            <person name="Goble A."/>
            <person name="Hamlin N."/>
            <person name="Harris D.E."/>
            <person name="Hidalgo J."/>
            <person name="Hodgson G."/>
            <person name="Holroyd S."/>
            <person name="Hornsby T."/>
            <person name="Howarth S."/>
            <person name="Huckle E.J."/>
            <person name="Hunt S."/>
            <person name="Jagels K."/>
            <person name="James K.D."/>
            <person name="Jones L."/>
            <person name="Jones M."/>
            <person name="Leather S."/>
            <person name="McDonald S."/>
            <person name="McLean J."/>
            <person name="Mooney P."/>
            <person name="Moule S."/>
            <person name="Mungall K.L."/>
            <person name="Murphy L.D."/>
            <person name="Niblett D."/>
            <person name="Odell C."/>
            <person name="Oliver K."/>
            <person name="O'Neil S."/>
            <person name="Pearson D."/>
            <person name="Quail M.A."/>
            <person name="Rabbinowitsch E."/>
            <person name="Rutherford K.M."/>
            <person name="Rutter S."/>
            <person name="Saunders D."/>
            <person name="Seeger K."/>
            <person name="Sharp S."/>
            <person name="Skelton J."/>
            <person name="Simmonds M.N."/>
            <person name="Squares R."/>
            <person name="Squares S."/>
            <person name="Stevens K."/>
            <person name="Taylor K."/>
            <person name="Taylor R.G."/>
            <person name="Tivey A."/>
            <person name="Walsh S.V."/>
            <person name="Warren T."/>
            <person name="Whitehead S."/>
            <person name="Woodward J.R."/>
            <person name="Volckaert G."/>
            <person name="Aert R."/>
            <person name="Robben J."/>
            <person name="Grymonprez B."/>
            <person name="Weltjens I."/>
            <person name="Vanstreels E."/>
            <person name="Rieger M."/>
            <person name="Schaefer M."/>
            <person name="Mueller-Auer S."/>
            <person name="Gabel C."/>
            <person name="Fuchs M."/>
            <person name="Duesterhoeft A."/>
            <person name="Fritzc C."/>
            <person name="Holzer E."/>
            <person name="Moestl D."/>
            <person name="Hilbert H."/>
            <person name="Borzym K."/>
            <person name="Langer I."/>
            <person name="Beck A."/>
            <person name="Lehrach H."/>
            <person name="Reinhardt R."/>
            <person name="Pohl T.M."/>
            <person name="Eger P."/>
            <person name="Zimmermann W."/>
            <person name="Wedler H."/>
            <person name="Wambutt R."/>
            <person name="Purnelle B."/>
            <person name="Goffeau A."/>
            <person name="Cadieu E."/>
            <person name="Dreano S."/>
            <person name="Gloux S."/>
            <person name="Lelaure V."/>
            <person name="Mottier S."/>
            <person name="Galibert F."/>
            <person name="Aves S.J."/>
            <person name="Xiang Z."/>
            <person name="Hunt C."/>
            <person name="Moore K."/>
            <person name="Hurst S.M."/>
            <person name="Lucas M."/>
            <person name="Rochet M."/>
            <person name="Gaillardin C."/>
            <person name="Tallada V.A."/>
            <person name="Garzon A."/>
            <person name="Thode G."/>
            <person name="Daga R.R."/>
            <person name="Cruzado L."/>
            <person name="Jimenez J."/>
            <person name="Sanchez M."/>
            <person name="del Rey F."/>
            <person name="Benito J."/>
            <person name="Dominguez A."/>
            <person name="Revuelta J.L."/>
            <person name="Moreno S."/>
            <person name="Armstrong J."/>
            <person name="Forsburg S.L."/>
            <person name="Cerutti L."/>
            <person name="Lowe T."/>
            <person name="McCombie W.R."/>
            <person name="Paulsen I."/>
            <person name="Potashkin J."/>
            <person name="Shpakovski G.V."/>
            <person name="Ussery D."/>
            <person name="Barrell B.G."/>
            <person name="Nurse P."/>
        </authorList>
    </citation>
    <scope>NUCLEOTIDE SEQUENCE [LARGE SCALE GENOMIC DNA]</scope>
    <source>
        <strain>972 / ATCC 24843</strain>
    </source>
</reference>
<reference key="2">
    <citation type="journal article" date="2006" name="Nat. Biotechnol.">
        <title>ORFeome cloning and global analysis of protein localization in the fission yeast Schizosaccharomyces pombe.</title>
        <authorList>
            <person name="Matsuyama A."/>
            <person name="Arai R."/>
            <person name="Yashiroda Y."/>
            <person name="Shirai A."/>
            <person name="Kamata A."/>
            <person name="Sekido S."/>
            <person name="Kobayashi Y."/>
            <person name="Hashimoto A."/>
            <person name="Hamamoto M."/>
            <person name="Hiraoka Y."/>
            <person name="Horinouchi S."/>
            <person name="Yoshida M."/>
        </authorList>
    </citation>
    <scope>SUBCELLULAR LOCATION [LARGE SCALE ANALYSIS]</scope>
</reference>
<gene>
    <name type="ORF">SPBC530.09c</name>
</gene>
<organism>
    <name type="scientific">Schizosaccharomyces pombe (strain 972 / ATCC 24843)</name>
    <name type="common">Fission yeast</name>
    <dbReference type="NCBI Taxonomy" id="284812"/>
    <lineage>
        <taxon>Eukaryota</taxon>
        <taxon>Fungi</taxon>
        <taxon>Dikarya</taxon>
        <taxon>Ascomycota</taxon>
        <taxon>Taphrinomycotina</taxon>
        <taxon>Schizosaccharomycetes</taxon>
        <taxon>Schizosaccharomycetales</taxon>
        <taxon>Schizosaccharomycetaceae</taxon>
        <taxon>Schizosaccharomyces</taxon>
    </lineage>
</organism>
<dbReference type="EMBL" id="CU329671">
    <property type="protein sequence ID" value="CAA19175.1"/>
    <property type="molecule type" value="Genomic_DNA"/>
</dbReference>
<dbReference type="PIR" id="T40525">
    <property type="entry name" value="T40525"/>
</dbReference>
<dbReference type="SMR" id="O59745"/>
<dbReference type="BioGRID" id="277579">
    <property type="interactions" value="1"/>
</dbReference>
<dbReference type="FunCoup" id="O59745">
    <property type="interactions" value="80"/>
</dbReference>
<dbReference type="STRING" id="284812.O59745"/>
<dbReference type="iPTMnet" id="O59745"/>
<dbReference type="PaxDb" id="4896-SPBC530.09c.1"/>
<dbReference type="EnsemblFungi" id="SPBC530.09c.1">
    <property type="protein sequence ID" value="SPBC530.09c.1:pep"/>
    <property type="gene ID" value="SPBC530.09c"/>
</dbReference>
<dbReference type="KEGG" id="spo:2541064"/>
<dbReference type="PomBase" id="SPBC530.09c"/>
<dbReference type="VEuPathDB" id="FungiDB:SPBC530.09c"/>
<dbReference type="eggNOG" id="KOG4504">
    <property type="taxonomic scope" value="Eukaryota"/>
</dbReference>
<dbReference type="HOGENOM" id="CLU_064145_0_0_1"/>
<dbReference type="InParanoid" id="O59745"/>
<dbReference type="OMA" id="RTKSTIM"/>
<dbReference type="PhylomeDB" id="O59745"/>
<dbReference type="Reactome" id="R-SPO-8856825">
    <property type="pathway name" value="Cargo recognition for clathrin-mediated endocytosis"/>
</dbReference>
<dbReference type="Reactome" id="R-SPO-8856828">
    <property type="pathway name" value="Clathrin-mediated endocytosis"/>
</dbReference>
<dbReference type="Reactome" id="R-SPO-9840310">
    <property type="pathway name" value="Glycosphingolipid catabolism"/>
</dbReference>
<dbReference type="PRO" id="PR:O59745"/>
<dbReference type="Proteomes" id="UP000002485">
    <property type="component" value="Chromosome II"/>
</dbReference>
<dbReference type="GO" id="GO:0010008">
    <property type="term" value="C:endosome membrane"/>
    <property type="evidence" value="ECO:0007669"/>
    <property type="project" value="UniProtKB-SubCell"/>
</dbReference>
<dbReference type="GO" id="GO:0005794">
    <property type="term" value="C:Golgi apparatus"/>
    <property type="evidence" value="ECO:0007005"/>
    <property type="project" value="PomBase"/>
</dbReference>
<dbReference type="GO" id="GO:0005770">
    <property type="term" value="C:late endosome"/>
    <property type="evidence" value="ECO:0000318"/>
    <property type="project" value="GO_Central"/>
</dbReference>
<dbReference type="GO" id="GO:0045324">
    <property type="term" value="P:late endosome to vacuole transport"/>
    <property type="evidence" value="ECO:0000266"/>
    <property type="project" value="PomBase"/>
</dbReference>
<dbReference type="GO" id="GO:0015031">
    <property type="term" value="P:protein transport"/>
    <property type="evidence" value="ECO:0007669"/>
    <property type="project" value="UniProtKB-KW"/>
</dbReference>
<dbReference type="GO" id="GO:0007034">
    <property type="term" value="P:vacuolar transport"/>
    <property type="evidence" value="ECO:0000318"/>
    <property type="project" value="GO_Central"/>
</dbReference>
<dbReference type="Gene3D" id="2.70.130.10">
    <property type="entry name" value="Mannose-6-phosphate receptor binding domain"/>
    <property type="match status" value="1"/>
</dbReference>
<dbReference type="InterPro" id="IPR028927">
    <property type="entry name" value="Man-6-P_rcpt"/>
</dbReference>
<dbReference type="InterPro" id="IPR009011">
    <property type="entry name" value="Man6P_isomerase_rcpt-bd_dom_sf"/>
</dbReference>
<dbReference type="InterPro" id="IPR044865">
    <property type="entry name" value="MRH_dom"/>
</dbReference>
<dbReference type="PANTHER" id="PTHR15071:SF0">
    <property type="entry name" value="MANNOSE 6-PHOSPHATE RECEPTOR-LIKE PROTEIN 1"/>
    <property type="match status" value="1"/>
</dbReference>
<dbReference type="PANTHER" id="PTHR15071">
    <property type="entry name" value="MANNOSE-6-PHOSPHATE RECEPTOR FAMILY MEMBER"/>
    <property type="match status" value="1"/>
</dbReference>
<dbReference type="Pfam" id="PF02157">
    <property type="entry name" value="Man-6-P_recep"/>
    <property type="match status" value="1"/>
</dbReference>
<dbReference type="SUPFAM" id="SSF50911">
    <property type="entry name" value="Mannose 6-phosphate receptor domain"/>
    <property type="match status" value="1"/>
</dbReference>
<dbReference type="PROSITE" id="PS51914">
    <property type="entry name" value="MRH"/>
    <property type="match status" value="1"/>
</dbReference>
<sequence length="296" mass="33404">MRLLTCLINVLAGLTLFSQFQRAFGLTITRRGFKVQESDEEPFCALHHPNTGEYFDLSGLIRDNTSEKGDYSVNGYDFGTNFSINLCHPVVSNLTNYTVEGDVSSEDSIGGFFTVEDDDLYSIGQAAYKPYFRGKKLIMQLDNGSLCPKSNHIRMSTLISFTCNRDPYTAPSVITYVGNLNDCAFFFEWKTIHACPTVKKDSTLNPVSVFLLFCAIAFLAYFVGGFVYQRVVLNARGLRQIPNYEMWRSLFGFISDIVIILYSSILSILPSSITRMRGNRRNIDYVEDALIDDIDT</sequence>
<accession>O59745</accession>
<protein>
    <recommendedName>
        <fullName>Putative mannose 6-phosphate receptor-like protein C530.09c</fullName>
    </recommendedName>
</protein>
<name>YN29_SCHPO</name>
<proteinExistence type="inferred from homology"/>
<feature type="signal peptide" evidence="1">
    <location>
        <begin position="1"/>
        <end position="25"/>
    </location>
</feature>
<feature type="chain" id="PRO_0000316243" description="Putative mannose 6-phosphate receptor-like protein C530.09c">
    <location>
        <begin position="26"/>
        <end position="296"/>
    </location>
</feature>
<feature type="topological domain" description="Lumenal" evidence="1">
    <location>
        <begin position="26"/>
        <end position="206"/>
    </location>
</feature>
<feature type="transmembrane region" description="Helical" evidence="1">
    <location>
        <begin position="207"/>
        <end position="227"/>
    </location>
</feature>
<feature type="topological domain" description="Cytoplasmic" evidence="1">
    <location>
        <begin position="228"/>
        <end position="249"/>
    </location>
</feature>
<feature type="transmembrane region" description="Helical" evidence="1">
    <location>
        <begin position="250"/>
        <end position="270"/>
    </location>
</feature>
<feature type="topological domain" description="Lumenal" evidence="1">
    <location>
        <begin position="271"/>
        <end position="296"/>
    </location>
</feature>
<feature type="domain" description="MRH" evidence="2">
    <location>
        <begin position="42"/>
        <end position="197"/>
    </location>
</feature>
<feature type="glycosylation site" description="N-linked (GlcNAc...) asparagine" evidence="1">
    <location>
        <position position="64"/>
    </location>
</feature>
<feature type="glycosylation site" description="N-linked (GlcNAc...) asparagine" evidence="1">
    <location>
        <position position="81"/>
    </location>
</feature>
<feature type="glycosylation site" description="N-linked (GlcNAc...) asparagine" evidence="1">
    <location>
        <position position="93"/>
    </location>
</feature>
<feature type="glycosylation site" description="N-linked (GlcNAc...) asparagine" evidence="1">
    <location>
        <position position="96"/>
    </location>
</feature>
<feature type="glycosylation site" description="N-linked (GlcNAc...) asparagine" evidence="1">
    <location>
        <position position="143"/>
    </location>
</feature>
<feature type="disulfide bond" evidence="2">
    <location>
        <begin position="44"/>
        <end position="87"/>
    </location>
</feature>
<feature type="disulfide bond" evidence="2">
    <location>
        <begin position="147"/>
        <end position="183"/>
    </location>
</feature>
<feature type="disulfide bond" evidence="2">
    <location>
        <begin position="163"/>
        <end position="195"/>
    </location>
</feature>
<evidence type="ECO:0000255" key="1"/>
<evidence type="ECO:0000255" key="2">
    <source>
        <dbReference type="PROSITE-ProRule" id="PRU01262"/>
    </source>
</evidence>
<evidence type="ECO:0000269" key="3">
    <source>
    </source>
</evidence>
<evidence type="ECO:0000305" key="4"/>